<organism>
    <name type="scientific">Xanthomonas oryzae pv. oryzae (strain MAFF 311018)</name>
    <dbReference type="NCBI Taxonomy" id="342109"/>
    <lineage>
        <taxon>Bacteria</taxon>
        <taxon>Pseudomonadati</taxon>
        <taxon>Pseudomonadota</taxon>
        <taxon>Gammaproteobacteria</taxon>
        <taxon>Lysobacterales</taxon>
        <taxon>Lysobacteraceae</taxon>
        <taxon>Xanthomonas</taxon>
    </lineage>
</organism>
<comment type="function">
    <text evidence="1">Catalyzes the methylthiolation of an aspartic acid residue of ribosomal protein uS12.</text>
</comment>
<comment type="catalytic activity">
    <reaction evidence="1">
        <text>L-aspartate(89)-[ribosomal protein uS12]-hydrogen + (sulfur carrier)-SH + AH2 + 2 S-adenosyl-L-methionine = 3-methylsulfanyl-L-aspartate(89)-[ribosomal protein uS12]-hydrogen + (sulfur carrier)-H + 5'-deoxyadenosine + L-methionine + A + S-adenosyl-L-homocysteine + 2 H(+)</text>
        <dbReference type="Rhea" id="RHEA:37087"/>
        <dbReference type="Rhea" id="RHEA-COMP:10460"/>
        <dbReference type="Rhea" id="RHEA-COMP:10461"/>
        <dbReference type="Rhea" id="RHEA-COMP:14737"/>
        <dbReference type="Rhea" id="RHEA-COMP:14739"/>
        <dbReference type="ChEBI" id="CHEBI:13193"/>
        <dbReference type="ChEBI" id="CHEBI:15378"/>
        <dbReference type="ChEBI" id="CHEBI:17319"/>
        <dbReference type="ChEBI" id="CHEBI:17499"/>
        <dbReference type="ChEBI" id="CHEBI:29917"/>
        <dbReference type="ChEBI" id="CHEBI:29961"/>
        <dbReference type="ChEBI" id="CHEBI:57844"/>
        <dbReference type="ChEBI" id="CHEBI:57856"/>
        <dbReference type="ChEBI" id="CHEBI:59789"/>
        <dbReference type="ChEBI" id="CHEBI:64428"/>
        <dbReference type="ChEBI" id="CHEBI:73599"/>
        <dbReference type="EC" id="2.8.4.4"/>
    </reaction>
</comment>
<comment type="cofactor">
    <cofactor evidence="1">
        <name>[4Fe-4S] cluster</name>
        <dbReference type="ChEBI" id="CHEBI:49883"/>
    </cofactor>
    <text evidence="1">Binds 2 [4Fe-4S] clusters. One cluster is coordinated with 3 cysteines and an exchangeable S-adenosyl-L-methionine.</text>
</comment>
<comment type="subcellular location">
    <subcellularLocation>
        <location evidence="1">Cytoplasm</location>
    </subcellularLocation>
</comment>
<comment type="similarity">
    <text evidence="1">Belongs to the methylthiotransferase family. RimO subfamily.</text>
</comment>
<evidence type="ECO:0000255" key="1">
    <source>
        <dbReference type="HAMAP-Rule" id="MF_01865"/>
    </source>
</evidence>
<evidence type="ECO:0000255" key="2">
    <source>
        <dbReference type="PROSITE-ProRule" id="PRU01266"/>
    </source>
</evidence>
<accession>Q2P0S4</accession>
<gene>
    <name evidence="1" type="primary">rimO</name>
    <name type="ordered locus">XOO3098</name>
</gene>
<proteinExistence type="inferred from homology"/>
<name>RIMO_XANOM</name>
<protein>
    <recommendedName>
        <fullName evidence="1">Ribosomal protein uS12 methylthiotransferase RimO</fullName>
        <shortName evidence="1">uS12 MTTase</shortName>
        <shortName evidence="1">uS12 methylthiotransferase</shortName>
        <ecNumber evidence="1">2.8.4.4</ecNumber>
    </recommendedName>
    <alternativeName>
        <fullName evidence="1">Ribosomal protein uS12 (aspartate-C(3))-methylthiotransferase</fullName>
    </alternativeName>
    <alternativeName>
        <fullName evidence="1">Ribosome maturation factor RimO</fullName>
    </alternativeName>
</protein>
<reference key="1">
    <citation type="journal article" date="2005" name="Jpn. Agric. Res. Q.">
        <title>Genome sequence of Xanthomonas oryzae pv. oryzae suggests contribution of large numbers of effector genes and insertion sequences to its race diversity.</title>
        <authorList>
            <person name="Ochiai H."/>
            <person name="Inoue Y."/>
            <person name="Takeya M."/>
            <person name="Sasaki A."/>
            <person name="Kaku H."/>
        </authorList>
    </citation>
    <scope>NUCLEOTIDE SEQUENCE [LARGE SCALE GENOMIC DNA]</scope>
    <source>
        <strain>MAFF 311018</strain>
    </source>
</reference>
<dbReference type="EC" id="2.8.4.4" evidence="1"/>
<dbReference type="EMBL" id="AP008229">
    <property type="protein sequence ID" value="BAE69853.1"/>
    <property type="molecule type" value="Genomic_DNA"/>
</dbReference>
<dbReference type="RefSeq" id="WP_011259780.1">
    <property type="nucleotide sequence ID" value="NC_007705.1"/>
</dbReference>
<dbReference type="SMR" id="Q2P0S4"/>
<dbReference type="KEGG" id="xom:XOO3098"/>
<dbReference type="HOGENOM" id="CLU_018697_0_0_6"/>
<dbReference type="GO" id="GO:0005829">
    <property type="term" value="C:cytosol"/>
    <property type="evidence" value="ECO:0007669"/>
    <property type="project" value="TreeGrafter"/>
</dbReference>
<dbReference type="GO" id="GO:0051539">
    <property type="term" value="F:4 iron, 4 sulfur cluster binding"/>
    <property type="evidence" value="ECO:0007669"/>
    <property type="project" value="UniProtKB-UniRule"/>
</dbReference>
<dbReference type="GO" id="GO:0035599">
    <property type="term" value="F:aspartic acid methylthiotransferase activity"/>
    <property type="evidence" value="ECO:0007669"/>
    <property type="project" value="TreeGrafter"/>
</dbReference>
<dbReference type="GO" id="GO:0046872">
    <property type="term" value="F:metal ion binding"/>
    <property type="evidence" value="ECO:0007669"/>
    <property type="project" value="UniProtKB-KW"/>
</dbReference>
<dbReference type="GO" id="GO:0103039">
    <property type="term" value="F:protein methylthiotransferase activity"/>
    <property type="evidence" value="ECO:0007669"/>
    <property type="project" value="UniProtKB-EC"/>
</dbReference>
<dbReference type="GO" id="GO:0006400">
    <property type="term" value="P:tRNA modification"/>
    <property type="evidence" value="ECO:0007669"/>
    <property type="project" value="InterPro"/>
</dbReference>
<dbReference type="CDD" id="cd01335">
    <property type="entry name" value="Radical_SAM"/>
    <property type="match status" value="1"/>
</dbReference>
<dbReference type="FunFam" id="2.40.50.140:FF:000210">
    <property type="entry name" value="Ribosomal protein S12 methylthiotransferase RimO"/>
    <property type="match status" value="1"/>
</dbReference>
<dbReference type="FunFam" id="3.40.50.12160:FF:000002">
    <property type="entry name" value="Ribosomal protein S12 methylthiotransferase RimO"/>
    <property type="match status" value="1"/>
</dbReference>
<dbReference type="FunFam" id="3.80.30.20:FF:000001">
    <property type="entry name" value="tRNA-2-methylthio-N(6)-dimethylallyladenosine synthase 2"/>
    <property type="match status" value="1"/>
</dbReference>
<dbReference type="Gene3D" id="3.40.50.12160">
    <property type="entry name" value="Methylthiotransferase, N-terminal domain"/>
    <property type="match status" value="1"/>
</dbReference>
<dbReference type="Gene3D" id="2.40.50.140">
    <property type="entry name" value="Nucleic acid-binding proteins"/>
    <property type="match status" value="1"/>
</dbReference>
<dbReference type="Gene3D" id="3.80.30.20">
    <property type="entry name" value="tm_1862 like domain"/>
    <property type="match status" value="1"/>
</dbReference>
<dbReference type="HAMAP" id="MF_01865">
    <property type="entry name" value="MTTase_RimO"/>
    <property type="match status" value="1"/>
</dbReference>
<dbReference type="InterPro" id="IPR006638">
    <property type="entry name" value="Elp3/MiaA/NifB-like_rSAM"/>
</dbReference>
<dbReference type="InterPro" id="IPR005839">
    <property type="entry name" value="Methylthiotransferase"/>
</dbReference>
<dbReference type="InterPro" id="IPR020612">
    <property type="entry name" value="Methylthiotransferase_CS"/>
</dbReference>
<dbReference type="InterPro" id="IPR013848">
    <property type="entry name" value="Methylthiotransferase_N"/>
</dbReference>
<dbReference type="InterPro" id="IPR038135">
    <property type="entry name" value="Methylthiotransferase_N_sf"/>
</dbReference>
<dbReference type="InterPro" id="IPR012340">
    <property type="entry name" value="NA-bd_OB-fold"/>
</dbReference>
<dbReference type="InterPro" id="IPR005840">
    <property type="entry name" value="Ribosomal_uS12_MeSTrfase_RimO"/>
</dbReference>
<dbReference type="InterPro" id="IPR007197">
    <property type="entry name" value="rSAM"/>
</dbReference>
<dbReference type="InterPro" id="IPR023404">
    <property type="entry name" value="rSAM_horseshoe"/>
</dbReference>
<dbReference type="InterPro" id="IPR002792">
    <property type="entry name" value="TRAM_dom"/>
</dbReference>
<dbReference type="NCBIfam" id="TIGR01125">
    <property type="entry name" value="30S ribosomal protein S12 methylthiotransferase RimO"/>
    <property type="match status" value="1"/>
</dbReference>
<dbReference type="NCBIfam" id="TIGR00089">
    <property type="entry name" value="MiaB/RimO family radical SAM methylthiotransferase"/>
    <property type="match status" value="1"/>
</dbReference>
<dbReference type="PANTHER" id="PTHR43837">
    <property type="entry name" value="RIBOSOMAL PROTEIN S12 METHYLTHIOTRANSFERASE RIMO"/>
    <property type="match status" value="1"/>
</dbReference>
<dbReference type="PANTHER" id="PTHR43837:SF1">
    <property type="entry name" value="RIBOSOMAL PROTEIN US12 METHYLTHIOTRANSFERASE RIMO"/>
    <property type="match status" value="1"/>
</dbReference>
<dbReference type="Pfam" id="PF04055">
    <property type="entry name" value="Radical_SAM"/>
    <property type="match status" value="1"/>
</dbReference>
<dbReference type="Pfam" id="PF18693">
    <property type="entry name" value="TRAM_2"/>
    <property type="match status" value="1"/>
</dbReference>
<dbReference type="Pfam" id="PF00919">
    <property type="entry name" value="UPF0004"/>
    <property type="match status" value="1"/>
</dbReference>
<dbReference type="SFLD" id="SFLDG01082">
    <property type="entry name" value="B12-binding_domain_containing"/>
    <property type="match status" value="1"/>
</dbReference>
<dbReference type="SFLD" id="SFLDG01061">
    <property type="entry name" value="methylthiotransferase"/>
    <property type="match status" value="1"/>
</dbReference>
<dbReference type="SFLD" id="SFLDF00274">
    <property type="entry name" value="ribosomal_protein_S12_methylth"/>
    <property type="match status" value="1"/>
</dbReference>
<dbReference type="SMART" id="SM00729">
    <property type="entry name" value="Elp3"/>
    <property type="match status" value="1"/>
</dbReference>
<dbReference type="SUPFAM" id="SSF102114">
    <property type="entry name" value="Radical SAM enzymes"/>
    <property type="match status" value="1"/>
</dbReference>
<dbReference type="PROSITE" id="PS51449">
    <property type="entry name" value="MTTASE_N"/>
    <property type="match status" value="1"/>
</dbReference>
<dbReference type="PROSITE" id="PS01278">
    <property type="entry name" value="MTTASE_RADICAL"/>
    <property type="match status" value="1"/>
</dbReference>
<dbReference type="PROSITE" id="PS51918">
    <property type="entry name" value="RADICAL_SAM"/>
    <property type="match status" value="1"/>
</dbReference>
<dbReference type="PROSITE" id="PS50926">
    <property type="entry name" value="TRAM"/>
    <property type="match status" value="1"/>
</dbReference>
<keyword id="KW-0004">4Fe-4S</keyword>
<keyword id="KW-0963">Cytoplasm</keyword>
<keyword id="KW-0408">Iron</keyword>
<keyword id="KW-0411">Iron-sulfur</keyword>
<keyword id="KW-0479">Metal-binding</keyword>
<keyword id="KW-0949">S-adenosyl-L-methionine</keyword>
<keyword id="KW-0808">Transferase</keyword>
<sequence>MKSIDYVNPVKNQVPKVGFVSLGCPKALVDSERILTQLRVEGYDIVPSYDAADVVVVNTCGFIDSAVTESLDAIGEAMNANGKVIVTGCLGKRPEQIREAYPQVLAVSGPQDYQSVMEAVHAALPPRHDPFVDLVPDYGIKLTPRHYAYLKISEGCNHRCSFCIIPSMRGDLVSRPVDEVLCEAERLVRGGVKELLVVSQDTSAYGVDLKYAERPWRDRMYQTRMKALCEGLSELGVWTRLHYVYPYPHVDDVLPLMAEGKLLPYLDIPFQHASPRILKLMKRPGAVEKTLQRVQRWKAMCPEITVRSTFIVGFPGETDAEFESLLDFLDQAQLDRVGAFAYSPVHGASANALPDPVPEEVKQERLARFMAKQAEISALRLEAKIGSVQQCLVDLIEDDIAVARSRADAPEIDGLVHIQNGGELGLKVGDLVDVEITDSDEHDLFGDALPANVVPQQGRALNLQMV</sequence>
<feature type="chain" id="PRO_0000375075" description="Ribosomal protein uS12 methylthiotransferase RimO">
    <location>
        <begin position="1"/>
        <end position="466"/>
    </location>
</feature>
<feature type="domain" description="MTTase N-terminal" evidence="1">
    <location>
        <begin position="15"/>
        <end position="125"/>
    </location>
</feature>
<feature type="domain" description="Radical SAM core" evidence="2">
    <location>
        <begin position="142"/>
        <end position="380"/>
    </location>
</feature>
<feature type="domain" description="TRAM" evidence="1">
    <location>
        <begin position="382"/>
        <end position="450"/>
    </location>
</feature>
<feature type="binding site" evidence="1">
    <location>
        <position position="24"/>
    </location>
    <ligand>
        <name>[4Fe-4S] cluster</name>
        <dbReference type="ChEBI" id="CHEBI:49883"/>
        <label>1</label>
    </ligand>
</feature>
<feature type="binding site" evidence="1">
    <location>
        <position position="60"/>
    </location>
    <ligand>
        <name>[4Fe-4S] cluster</name>
        <dbReference type="ChEBI" id="CHEBI:49883"/>
        <label>1</label>
    </ligand>
</feature>
<feature type="binding site" evidence="1">
    <location>
        <position position="89"/>
    </location>
    <ligand>
        <name>[4Fe-4S] cluster</name>
        <dbReference type="ChEBI" id="CHEBI:49883"/>
        <label>1</label>
    </ligand>
</feature>
<feature type="binding site" evidence="1">
    <location>
        <position position="156"/>
    </location>
    <ligand>
        <name>[4Fe-4S] cluster</name>
        <dbReference type="ChEBI" id="CHEBI:49883"/>
        <label>2</label>
        <note>4Fe-4S-S-AdoMet</note>
    </ligand>
</feature>
<feature type="binding site" evidence="1">
    <location>
        <position position="160"/>
    </location>
    <ligand>
        <name>[4Fe-4S] cluster</name>
        <dbReference type="ChEBI" id="CHEBI:49883"/>
        <label>2</label>
        <note>4Fe-4S-S-AdoMet</note>
    </ligand>
</feature>
<feature type="binding site" evidence="1">
    <location>
        <position position="163"/>
    </location>
    <ligand>
        <name>[4Fe-4S] cluster</name>
        <dbReference type="ChEBI" id="CHEBI:49883"/>
        <label>2</label>
        <note>4Fe-4S-S-AdoMet</note>
    </ligand>
</feature>